<name>MID1_YEAST</name>
<proteinExistence type="evidence at protein level"/>
<gene>
    <name type="primary">MID1</name>
    <name type="ordered locus">YNL291C</name>
    <name type="ORF">N0530</name>
</gene>
<evidence type="ECO:0000255" key="1"/>
<evidence type="ECO:0000269" key="2">
    <source>
    </source>
</evidence>
<evidence type="ECO:0000269" key="3">
    <source>
    </source>
</evidence>
<evidence type="ECO:0000269" key="4">
    <source>
    </source>
</evidence>
<evidence type="ECO:0000269" key="5">
    <source>
    </source>
</evidence>
<evidence type="ECO:0000269" key="6">
    <source>
    </source>
</evidence>
<evidence type="ECO:0000269" key="7">
    <source>
    </source>
</evidence>
<evidence type="ECO:0000269" key="8">
    <source>
    </source>
</evidence>
<evidence type="ECO:0000269" key="9">
    <source>
    </source>
</evidence>
<evidence type="ECO:0000269" key="10">
    <source>
    </source>
</evidence>
<evidence type="ECO:0000269" key="11">
    <source>
    </source>
</evidence>
<keyword id="KW-0106">Calcium</keyword>
<keyword id="KW-0107">Calcium channel</keyword>
<keyword id="KW-0109">Calcium transport</keyword>
<keyword id="KW-1003">Cell membrane</keyword>
<keyword id="KW-1015">Disulfide bond</keyword>
<keyword id="KW-0325">Glycoprotein</keyword>
<keyword id="KW-0407">Ion channel</keyword>
<keyword id="KW-0406">Ion transport</keyword>
<keyword id="KW-0472">Membrane</keyword>
<keyword id="KW-1185">Reference proteome</keyword>
<keyword id="KW-0732">Signal</keyword>
<keyword id="KW-0812">Transmembrane</keyword>
<keyword id="KW-1133">Transmembrane helix</keyword>
<keyword id="KW-0813">Transport</keyword>
<feature type="signal peptide" evidence="1">
    <location>
        <begin position="1"/>
        <end position="20"/>
    </location>
</feature>
<feature type="chain" id="PRO_0000096483" description="Stretch-activated cation channel MID1">
    <location>
        <begin position="21"/>
        <end position="548"/>
    </location>
</feature>
<feature type="topological domain" description="Extracellular" evidence="1">
    <location>
        <begin position="21"/>
        <end position="341"/>
    </location>
</feature>
<feature type="transmembrane region" description="Helical" evidence="1">
    <location>
        <begin position="342"/>
        <end position="358"/>
    </location>
</feature>
<feature type="topological domain" description="Cytoplasmic" evidence="1">
    <location>
        <begin position="359"/>
        <end position="548"/>
    </location>
</feature>
<feature type="glycosylation site" description="N-linked (GlcNAc...) asparagine" evidence="1">
    <location>
        <position position="32"/>
    </location>
</feature>
<feature type="glycosylation site" description="N-linked (GlcNAc...) asparagine" evidence="1">
    <location>
        <position position="70"/>
    </location>
</feature>
<feature type="glycosylation site" description="N-linked (GlcNAc...) asparagine" evidence="1">
    <location>
        <position position="112"/>
    </location>
</feature>
<feature type="glycosylation site" description="N-linked (GlcNAc...) asparagine" evidence="1">
    <location>
        <position position="125"/>
    </location>
</feature>
<feature type="glycosylation site" description="N-linked (GlcNAc...) asparagine" evidence="1">
    <location>
        <position position="159"/>
    </location>
</feature>
<feature type="glycosylation site" description="N-linked (GlcNAc...) asparagine" evidence="1">
    <location>
        <position position="175"/>
    </location>
</feature>
<feature type="glycosylation site" description="N-linked (GlcNAc...) asparagine" evidence="1">
    <location>
        <position position="228"/>
    </location>
</feature>
<feature type="glycosylation site" description="N-linked (GlcNAc...) asparagine" evidence="1">
    <location>
        <position position="238"/>
    </location>
</feature>
<feature type="glycosylation site" description="N-linked (GlcNAc...) asparagine" evidence="1">
    <location>
        <position position="265"/>
    </location>
</feature>
<feature type="glycosylation site" description="N-linked (GlcNAc...) asparagine" evidence="1">
    <location>
        <position position="282"/>
    </location>
</feature>
<feature type="glycosylation site" description="N-linked (GlcNAc...) asparagine" evidence="1">
    <location>
        <position position="285"/>
    </location>
</feature>
<feature type="glycosylation site" description="N-linked (GlcNAc...) asparagine" evidence="1">
    <location>
        <position position="291"/>
    </location>
</feature>
<feature type="glycosylation site" description="N-linked (GlcNAc...) asparagine" evidence="1">
    <location>
        <position position="324"/>
    </location>
</feature>
<feature type="mutagenesis site" description="Significantly low viability and relatively normal Ca(2+) accumulation." evidence="6">
    <original>F</original>
    <variation>A</variation>
    <location>
        <position position="356"/>
    </location>
</feature>
<feature type="mutagenesis site" description="Substitution by hydrophilic amino acids causes lethality and low Ca(2+) accumulation." evidence="6">
    <original>F</original>
    <variation>H</variation>
    <variation>Q</variation>
    <variation>D</variation>
    <variation>E</variation>
    <variation>K</variation>
    <variation>R</variation>
    <location>
        <position position="356"/>
    </location>
</feature>
<feature type="mutagenesis site" description="Substitution by hydrophobic, large amino acids does not cause lethality nor low Ca(2+) accumulation." evidence="6">
    <original>F</original>
    <variation>L</variation>
    <variation>W</variation>
    <variation>Y</variation>
    <location>
        <position position="356"/>
    </location>
</feature>
<feature type="mutagenesis site" description="Non-functional." evidence="4">
    <original>C</original>
    <variation>A</variation>
    <location>
        <position position="417"/>
    </location>
</feature>
<feature type="mutagenesis site" description="Non-functional." evidence="4">
    <original>C</original>
    <variation>A</variation>
    <location>
        <position position="431"/>
    </location>
</feature>
<feature type="mutagenesis site" description="Non-functional." evidence="4">
    <original>C</original>
    <variation>A</variation>
    <location>
        <position position="434"/>
    </location>
</feature>
<feature type="mutagenesis site" description="Functionally impaired." evidence="4">
    <original>C</original>
    <variation>A</variation>
    <location>
        <position position="491"/>
    </location>
</feature>
<feature type="mutagenesis site" description="Non-functional." evidence="4">
    <original>C</original>
    <variation>A</variation>
    <location>
        <position position="498"/>
    </location>
</feature>
<feature type="mutagenesis site" description="Functionally impaired." evidence="4">
    <original>C</original>
    <variation>A</variation>
    <location>
        <position position="506"/>
    </location>
</feature>
<feature type="mutagenesis site" description="Functionally impaired." evidence="4">
    <original>C</original>
    <variation>A</variation>
    <location>
        <position position="531"/>
    </location>
</feature>
<sequence length="548" mass="61575">MIVWQALFVVYCLFTTSIHGLFQDFNPFANKNISLKFPSLNRWEKNVMATGQQTIINSDSIYEWTPILSNITAGKKDSFVFTIDAEASGYGFAPTYEVLMFISGNICQMPMNRSDVDLTIYYSFNETVLENPNIGQSAVFQDGYIQALAISPVQSSSSNATSTYSNLYVVAELVNSTTEQPLSSSDASENWEYRLSISENDLVFQWDVRPWVEVLDTDMNSALLSTGNVTADAKVYHNYSIYDPSLYDLYVYSYEDSVQLNQNYNLSLCAVKNGPYLVSSQNTSNATVTSNSTNPLERTDLAIQKKITEYGGSVTEMFYVTGLNASTTYVAYLTKKISNGDGLSSVGGILFSHVYFTTRSTDVCSLIFGLDFCSDVAYSVPTSSFSVGNKTLMAQTYDHIAEALYANFSKALQLISCDADKDARYSPVMTCDDCAEAYRDWVCAVSIPRCTTTSSQYYIHRDKSHNRNDYLNKFIKPLDDYYEILPCIDMCYTLVRNCPSDFQFSCPNDLTTEDLLYQSYNFYMDTDYSTCNYIGNSSLMVIHPLDDT</sequence>
<protein>
    <recommendedName>
        <fullName>Stretch-activated cation channel MID1</fullName>
    </recommendedName>
    <alternativeName>
        <fullName>Mating pheromone-induced death protein 2</fullName>
    </alternativeName>
</protein>
<accession>P41821</accession>
<accession>D6W0Q2</accession>
<dbReference type="EMBL" id="D32133">
    <property type="protein sequence ID" value="BAA06859.1"/>
    <property type="molecule type" value="Genomic_DNA"/>
</dbReference>
<dbReference type="EMBL" id="U23084">
    <property type="protein sequence ID" value="AAC49109.1"/>
    <property type="molecule type" value="Genomic_DNA"/>
</dbReference>
<dbReference type="EMBL" id="Z71567">
    <property type="protein sequence ID" value="CAA96209.1"/>
    <property type="molecule type" value="Genomic_DNA"/>
</dbReference>
<dbReference type="EMBL" id="Z71566">
    <property type="protein sequence ID" value="CAA96208.1"/>
    <property type="molecule type" value="Genomic_DNA"/>
</dbReference>
<dbReference type="EMBL" id="BK006947">
    <property type="protein sequence ID" value="DAA10268.1"/>
    <property type="molecule type" value="Genomic_DNA"/>
</dbReference>
<dbReference type="PIR" id="A56353">
    <property type="entry name" value="A56353"/>
</dbReference>
<dbReference type="RefSeq" id="NP_014108.1">
    <property type="nucleotide sequence ID" value="NM_001183129.1"/>
</dbReference>
<dbReference type="BioGRID" id="35546">
    <property type="interactions" value="136"/>
</dbReference>
<dbReference type="DIP" id="DIP-5621N"/>
<dbReference type="FunCoup" id="P41821">
    <property type="interactions" value="73"/>
</dbReference>
<dbReference type="IntAct" id="P41821">
    <property type="interactions" value="2"/>
</dbReference>
<dbReference type="MINT" id="P41821"/>
<dbReference type="STRING" id="4932.YNL291C"/>
<dbReference type="TCDB" id="8.A.41.1.1">
    <property type="family name" value="the stretch-activated calcium channel auxiliary protein, mid1 (mid1) family"/>
</dbReference>
<dbReference type="GlyCosmos" id="P41821">
    <property type="glycosylation" value="13 sites, No reported glycans"/>
</dbReference>
<dbReference type="GlyGen" id="P41821">
    <property type="glycosylation" value="13 sites"/>
</dbReference>
<dbReference type="PaxDb" id="4932-YNL291C"/>
<dbReference type="PeptideAtlas" id="P41821"/>
<dbReference type="EnsemblFungi" id="YNL291C_mRNA">
    <property type="protein sequence ID" value="YNL291C"/>
    <property type="gene ID" value="YNL291C"/>
</dbReference>
<dbReference type="GeneID" id="855425"/>
<dbReference type="KEGG" id="sce:YNL291C"/>
<dbReference type="AGR" id="SGD:S000005235"/>
<dbReference type="SGD" id="S000005235">
    <property type="gene designation" value="MID1"/>
</dbReference>
<dbReference type="VEuPathDB" id="FungiDB:YNL291C"/>
<dbReference type="eggNOG" id="ENOG502QTEW">
    <property type="taxonomic scope" value="Eukaryota"/>
</dbReference>
<dbReference type="HOGENOM" id="CLU_018731_1_0_1"/>
<dbReference type="InParanoid" id="P41821"/>
<dbReference type="OMA" id="YEILPCI"/>
<dbReference type="OrthoDB" id="5405745at2759"/>
<dbReference type="BioCyc" id="YEAST:G3O-33281-MONOMER"/>
<dbReference type="BioGRID-ORCS" id="855425">
    <property type="hits" value="2 hits in 10 CRISPR screens"/>
</dbReference>
<dbReference type="PRO" id="PR:P41821"/>
<dbReference type="Proteomes" id="UP000002311">
    <property type="component" value="Chromosome XIV"/>
</dbReference>
<dbReference type="RNAct" id="P41821">
    <property type="molecule type" value="protein"/>
</dbReference>
<dbReference type="GO" id="GO:0005783">
    <property type="term" value="C:endoplasmic reticulum"/>
    <property type="evidence" value="ECO:0000314"/>
    <property type="project" value="SGD"/>
</dbReference>
<dbReference type="GO" id="GO:0005886">
    <property type="term" value="C:plasma membrane"/>
    <property type="evidence" value="ECO:0000314"/>
    <property type="project" value="SGD"/>
</dbReference>
<dbReference type="GO" id="GO:0005262">
    <property type="term" value="F:calcium channel activity"/>
    <property type="evidence" value="ECO:0000315"/>
    <property type="project" value="SGD"/>
</dbReference>
<dbReference type="GO" id="GO:0015275">
    <property type="term" value="F:stretch-activated, monoatomic cation-selective, calcium channel activity"/>
    <property type="evidence" value="ECO:0000314"/>
    <property type="project" value="SGD"/>
</dbReference>
<dbReference type="GO" id="GO:0098703">
    <property type="term" value="P:calcium ion import across plasma membrane"/>
    <property type="evidence" value="ECO:0000318"/>
    <property type="project" value="GO_Central"/>
</dbReference>
<dbReference type="GO" id="GO:0006816">
    <property type="term" value="P:calcium ion transport"/>
    <property type="evidence" value="ECO:0000314"/>
    <property type="project" value="SGD"/>
</dbReference>
<dbReference type="InterPro" id="IPR024338">
    <property type="entry name" value="MID1/Yam8"/>
</dbReference>
<dbReference type="PANTHER" id="PTHR39142:SF1">
    <property type="entry name" value="AEL197CP"/>
    <property type="match status" value="1"/>
</dbReference>
<dbReference type="PANTHER" id="PTHR39142">
    <property type="entry name" value="MID1P"/>
    <property type="match status" value="1"/>
</dbReference>
<dbReference type="Pfam" id="PF12929">
    <property type="entry name" value="Mid1"/>
    <property type="match status" value="1"/>
</dbReference>
<comment type="function">
    <text evidence="2 3 9 11">Calcium-permeable, cation-selective stretch-activated channel (SAC) that functions together with CCH1 to mediate calcium entry into cells (PubMed:10436155, PubMed:10958666, PubMed:16223494, PubMed:7526155). Required during mating (PubMed:7526155). Together with CCH1, essential for tolerance to iron stress, which leads to an increased oxidative poise, and to cold stress (PubMed:16223494).</text>
</comment>
<comment type="subunit">
    <text evidence="3 7">Forms an oligomer with a molecular mass of 200 kDa by disulfide bonds (PubMed:14729456). Interacts with CCH1 to form a Ca(2+) influx channel (PubMed:10958666).</text>
</comment>
<comment type="subcellular location">
    <subcellularLocation>
        <location evidence="7 8 11">Cell membrane</location>
        <topology evidence="1">Single-pass type I membrane protein</topology>
    </subcellularLocation>
    <text evidence="8">Trafficking to the plasma membrane is dependent on the N-glycosylation and the transporter protein SEC12.</text>
</comment>
<comment type="PTM">
    <text evidence="11">N-glycosylated.</text>
</comment>
<comment type="disruption phenotype">
    <text evidence="10">Growth defect during calcium starvation and in the presence of lithium.</text>
</comment>
<comment type="miscellaneous">
    <text evidence="5">Present with 3210 molecules/cell in log phase SD medium.</text>
</comment>
<reference key="1">
    <citation type="journal article" date="1994" name="Mol. Cell. Biol.">
        <title>MID1, a novel Saccharomyces cerevisiae gene encoding a plasma membrane protein, is required for Ca2+ influx and mating.</title>
        <authorList>
            <person name="Iida H."/>
            <person name="Nakamura H."/>
            <person name="Ono T."/>
            <person name="Okumura M.S."/>
            <person name="Anraku Y."/>
        </authorList>
    </citation>
    <scope>NUCLEOTIDE SEQUENCE [GENOMIC DNA]</scope>
    <scope>FUNCTION</scope>
    <scope>SUBCELLULAR LOCATION</scope>
    <scope>GLYCOSYLATION</scope>
</reference>
<reference key="2">
    <citation type="journal article" date="1995" name="Yeast">
        <title>Sequence analysis of a 30 kb DNA segment from yeast chromosome XIV carrying a ribosomal protein gene cluster, the genes encoding a plasma membrane protein and a subunit of replication factor C, and a novel putative serine/threonine protein kinase gene.</title>
        <authorList>
            <person name="Maurer K.C.T."/>
            <person name="Urbanus J.H.M."/>
            <person name="Planta R.J."/>
        </authorList>
    </citation>
    <scope>NUCLEOTIDE SEQUENCE [GENOMIC DNA]</scope>
    <source>
        <strain>ATCC 96604 / S288c / FY1679</strain>
    </source>
</reference>
<reference key="3">
    <citation type="journal article" date="1997" name="Nature">
        <title>The nucleotide sequence of Saccharomyces cerevisiae chromosome XIV and its evolutionary implications.</title>
        <authorList>
            <person name="Philippsen P."/>
            <person name="Kleine K."/>
            <person name="Poehlmann R."/>
            <person name="Duesterhoeft A."/>
            <person name="Hamberg K."/>
            <person name="Hegemann J.H."/>
            <person name="Obermaier B."/>
            <person name="Urrestarazu L.A."/>
            <person name="Aert R."/>
            <person name="Albermann K."/>
            <person name="Altmann R."/>
            <person name="Andre B."/>
            <person name="Baladron V."/>
            <person name="Ballesta J.P.G."/>
            <person name="Becam A.-M."/>
            <person name="Beinhauer J.D."/>
            <person name="Boskovic J."/>
            <person name="Buitrago M.J."/>
            <person name="Bussereau F."/>
            <person name="Coster F."/>
            <person name="Crouzet M."/>
            <person name="D'Angelo M."/>
            <person name="Dal Pero F."/>
            <person name="De Antoni A."/>
            <person name="del Rey F."/>
            <person name="Doignon F."/>
            <person name="Domdey H."/>
            <person name="Dubois E."/>
            <person name="Fiedler T.A."/>
            <person name="Fleig U."/>
            <person name="Floeth M."/>
            <person name="Fritz C."/>
            <person name="Gaillardin C."/>
            <person name="Garcia-Cantalejo J.M."/>
            <person name="Glansdorff N."/>
            <person name="Goffeau A."/>
            <person name="Gueldener U."/>
            <person name="Herbert C.J."/>
            <person name="Heumann K."/>
            <person name="Heuss-Neitzel D."/>
            <person name="Hilbert H."/>
            <person name="Hinni K."/>
            <person name="Iraqui Houssaini I."/>
            <person name="Jacquet M."/>
            <person name="Jimenez A."/>
            <person name="Jonniaux J.-L."/>
            <person name="Karpfinger-Hartl L."/>
            <person name="Lanfranchi G."/>
            <person name="Lepingle A."/>
            <person name="Levesque H."/>
            <person name="Lyck R."/>
            <person name="Maftahi M."/>
            <person name="Mallet L."/>
            <person name="Maurer C.T.C."/>
            <person name="Messenguy F."/>
            <person name="Mewes H.-W."/>
            <person name="Moestl D."/>
            <person name="Nasr F."/>
            <person name="Nicaud J.-M."/>
            <person name="Niedenthal R.K."/>
            <person name="Pandolfo D."/>
            <person name="Pierard A."/>
            <person name="Piravandi E."/>
            <person name="Planta R.J."/>
            <person name="Pohl T.M."/>
            <person name="Purnelle B."/>
            <person name="Rebischung C."/>
            <person name="Remacha M.A."/>
            <person name="Revuelta J.L."/>
            <person name="Rinke M."/>
            <person name="Saiz J.E."/>
            <person name="Sartorello F."/>
            <person name="Scherens B."/>
            <person name="Sen-Gupta M."/>
            <person name="Soler-Mira A."/>
            <person name="Urbanus J.H.M."/>
            <person name="Valle G."/>
            <person name="Van Dyck L."/>
            <person name="Verhasselt P."/>
            <person name="Vierendeels F."/>
            <person name="Vissers S."/>
            <person name="Voet M."/>
            <person name="Volckaert G."/>
            <person name="Wach A."/>
            <person name="Wambutt R."/>
            <person name="Wedler H."/>
            <person name="Zollner A."/>
            <person name="Hani J."/>
        </authorList>
    </citation>
    <scope>NUCLEOTIDE SEQUENCE [LARGE SCALE GENOMIC DNA]</scope>
    <source>
        <strain>ATCC 204508 / S288c</strain>
    </source>
</reference>
<reference key="4">
    <citation type="journal article" date="2014" name="G3 (Bethesda)">
        <title>The reference genome sequence of Saccharomyces cerevisiae: Then and now.</title>
        <authorList>
            <person name="Engel S.R."/>
            <person name="Dietrich F.S."/>
            <person name="Fisk D.G."/>
            <person name="Binkley G."/>
            <person name="Balakrishnan R."/>
            <person name="Costanzo M.C."/>
            <person name="Dwight S.S."/>
            <person name="Hitz B.C."/>
            <person name="Karra K."/>
            <person name="Nash R.S."/>
            <person name="Weng S."/>
            <person name="Wong E.D."/>
            <person name="Lloyd P."/>
            <person name="Skrzypek M.S."/>
            <person name="Miyasato S.R."/>
            <person name="Simison M."/>
            <person name="Cherry J.M."/>
        </authorList>
    </citation>
    <scope>GENOME REANNOTATION</scope>
    <source>
        <strain>ATCC 204508 / S288c</strain>
    </source>
</reference>
<reference key="5">
    <citation type="journal article" date="1999" name="Science">
        <title>Molecular identification of a eukaryotic, stretch-activated nonselective cation channel.</title>
        <authorList>
            <person name="Kanzaki M."/>
            <person name="Nagasawa M."/>
            <person name="Kojima I."/>
            <person name="Sato C."/>
            <person name="Naruse K."/>
            <person name="Sokabe M."/>
            <person name="Iida H."/>
        </authorList>
    </citation>
    <scope>FUNCTION</scope>
</reference>
<reference key="6">
    <citation type="journal article" date="2000" name="Science">
        <authorList>
            <person name="Kanzaki M."/>
            <person name="Nagasawa M."/>
            <person name="Kojima I."/>
            <person name="Sato C."/>
            <person name="Naruse K."/>
            <person name="Sokabe M."/>
            <person name="Iida H."/>
        </authorList>
    </citation>
    <scope>ERRATUM OF PUBMED:10436155</scope>
</reference>
<reference key="7">
    <citation type="journal article" date="2000" name="Mol. Cell. Biol.">
        <title>A homolog of voltage-gated Ca(2+) channels stimulated by depletion of secretory Ca(2+) in yeast.</title>
        <authorList>
            <person name="Locke E.G."/>
            <person name="Bonilla M."/>
            <person name="Liang L."/>
            <person name="Takita Y."/>
            <person name="Cunningham K.W."/>
        </authorList>
    </citation>
    <scope>FUNCTION</scope>
    <scope>INTERACTION WITH CCH1</scope>
    <scope>SUBCELLULAR LOCATION</scope>
</reference>
<reference key="8">
    <citation type="journal article" date="2002" name="J. Biol. Chem.">
        <title>Essential hydrophilic carboxyl-terminal regions including cysteine residues of the yeast stretch-activated calcium-permeable channel Mid1.</title>
        <authorList>
            <person name="Maruoka T."/>
            <person name="Nagasoe Y."/>
            <person name="Inoue S."/>
            <person name="Mori Y."/>
            <person name="Goto J."/>
            <person name="Ikeda M."/>
            <person name="Iida H."/>
        </authorList>
    </citation>
    <scope>MUTAGENESIS OF CYS-417; CYS-431; CYS-434; CYS-491; CYS-498; CYS-506 AND CYS-531</scope>
</reference>
<reference key="9">
    <citation type="journal article" date="2003" name="Nature">
        <title>Global analysis of protein expression in yeast.</title>
        <authorList>
            <person name="Ghaemmaghami S."/>
            <person name="Huh W.-K."/>
            <person name="Bower K."/>
            <person name="Howson R.W."/>
            <person name="Belle A."/>
            <person name="Dephoure N."/>
            <person name="O'Shea E.K."/>
            <person name="Weissman J.S."/>
        </authorList>
    </citation>
    <scope>LEVEL OF PROTEIN EXPRESSION [LARGE SCALE ANALYSIS]</scope>
</reference>
<reference key="10">
    <citation type="journal article" date="2004" name="Biochem. Biophys. Res. Commun.">
        <title>Phe356 in the yeast Ca2+ channel component Mid1 is a key residue for viability after exposure to alpha-factor.</title>
        <authorList>
            <person name="Tada T."/>
            <person name="Ohmori M."/>
            <person name="Iida H."/>
        </authorList>
    </citation>
    <scope>MUTAGENESIS OF PHE-356</scope>
</reference>
<reference key="11">
    <citation type="journal article" date="2004" name="Exp. Cell Res.">
        <title>Subcellular localization and oligomeric structure of the yeast putative stretch-activated Ca2+ channel component Mid1.</title>
        <authorList>
            <person name="Yoshimura H."/>
            <person name="Tada T."/>
            <person name="Iida H."/>
        </authorList>
    </citation>
    <scope>SUBCELLULAR LOCATION</scope>
    <scope>SUBUNIT</scope>
</reference>
<reference key="12">
    <citation type="journal article" date="2005" name="Exp. Cell Res.">
        <title>Identification of functional domains of Mid1, a stretch-activated channel component, necessary for localization to the plasma membrane and Ca2+ permeation.</title>
        <authorList>
            <person name="Ozeki-Miyawaki C."/>
            <person name="Moriya Y."/>
            <person name="Tatsumi H."/>
            <person name="Iida H."/>
            <person name="Sokabe M."/>
        </authorList>
    </citation>
    <scope>DELETION MUTANTS</scope>
    <scope>SUBCELLULAR LOCATION</scope>
</reference>
<reference key="13">
    <citation type="journal article" date="2005" name="FEBS Lett.">
        <title>The Saccharomyces cerevisiae Ca2+ channel Cch1pMid1p is essential for tolerance to cold stress and iron toxicity.</title>
        <authorList>
            <person name="Peiter E."/>
            <person name="Fischer M."/>
            <person name="Sidaway K."/>
            <person name="Roberts S.K."/>
            <person name="Sanders D."/>
        </authorList>
    </citation>
    <scope>FUNCTION</scope>
</reference>
<reference key="14">
    <citation type="journal article" date="2006" name="Eukaryot. Cell">
        <title>Cch1 mediates calcium entry in Cryptococcus neoformans and is essential in low-calcium environments.</title>
        <authorList>
            <person name="Liu M."/>
            <person name="Du P."/>
            <person name="Heinrich G."/>
            <person name="Cox G.M."/>
            <person name="Gelli A."/>
        </authorList>
    </citation>
    <scope>DISRUPTION PHENOTYPE</scope>
</reference>
<organism>
    <name type="scientific">Saccharomyces cerevisiae (strain ATCC 204508 / S288c)</name>
    <name type="common">Baker's yeast</name>
    <dbReference type="NCBI Taxonomy" id="559292"/>
    <lineage>
        <taxon>Eukaryota</taxon>
        <taxon>Fungi</taxon>
        <taxon>Dikarya</taxon>
        <taxon>Ascomycota</taxon>
        <taxon>Saccharomycotina</taxon>
        <taxon>Saccharomycetes</taxon>
        <taxon>Saccharomycetales</taxon>
        <taxon>Saccharomycetaceae</taxon>
        <taxon>Saccharomyces</taxon>
    </lineage>
</organism>